<sequence>MRQLISPEALRAFRQSVQGSVGFVPTMGALHAGHRSLIERSRQQDDVVIVSIFVNPRQFGPQEDLSRYPQTLDADLALCEAAGVDAVFCPTAEALYPRPSDRSTGVQPPAELIQSLCGRQRPGHFQGVATVVLKLLQLVQPQRAYFGEKDAQQLRVIQRLVEDFNLPIAIVPCPTVREPDGLALSSRNRYLTFEERSQASGLYRALRAAAECFQAGSRDSQELVAAATAVLATTPAVQLEYCDCVDADSLQPLTQIPDRALLAIAARVGTARLIDNLTLQGRRPIIAIDGPAGAGKSTVTKRLAQQLGLLYLDTGAMYRAVTWLVQQQGIDPQDPIVLAELLAQADLQLRSQPAADGSEQLQVLIQGNDVTAAIRTPTVTAQVSAIAALPLVRQFLVEQQRQLGQRGGLVAEGRDIGTHVFPDAELKIFLTATNAERARRRALDLEAQGLTVDLAQLEAEIRDRDRQDSERAIAPLCKAEDAVEVLTDGLSIEAVTDQIIRLYRDRGLGDSSPQATPGQTPSPLSLG</sequence>
<evidence type="ECO:0000255" key="1">
    <source>
        <dbReference type="HAMAP-Rule" id="MF_01349"/>
    </source>
</evidence>
<evidence type="ECO:0000256" key="2">
    <source>
        <dbReference type="SAM" id="MobiDB-lite"/>
    </source>
</evidence>
<name>PANCY_SYNE7</name>
<protein>
    <recommendedName>
        <fullName evidence="1">Bifunctional pantoate ligase/cytidylate kinase</fullName>
    </recommendedName>
    <domain>
        <recommendedName>
            <fullName evidence="1">Pantothenate synthetase</fullName>
            <shortName evidence="1">PS</shortName>
            <ecNumber evidence="1">6.3.2.1</ecNumber>
        </recommendedName>
        <alternativeName>
            <fullName evidence="1">Pantoate--beta-alanine ligase</fullName>
        </alternativeName>
        <alternativeName>
            <fullName evidence="1">Pantoate-activating enzyme</fullName>
        </alternativeName>
    </domain>
    <domain>
        <recommendedName>
            <fullName evidence="1">Cytidylate kinase</fullName>
            <shortName evidence="1">CK</shortName>
            <ecNumber evidence="1">2.7.4.25</ecNumber>
        </recommendedName>
        <alternativeName>
            <fullName evidence="1">Cytidine monophosphate kinase</fullName>
            <shortName evidence="1">CMP kinase</shortName>
        </alternativeName>
    </domain>
</protein>
<accession>Q31P38</accession>
<proteinExistence type="inferred from homology"/>
<dbReference type="EC" id="6.3.2.1" evidence="1"/>
<dbReference type="EC" id="2.7.4.25" evidence="1"/>
<dbReference type="EMBL" id="CP000100">
    <property type="protein sequence ID" value="ABB57181.1"/>
    <property type="molecule type" value="Genomic_DNA"/>
</dbReference>
<dbReference type="RefSeq" id="WP_011242711.1">
    <property type="nucleotide sequence ID" value="NZ_JACJTX010000003.1"/>
</dbReference>
<dbReference type="SMR" id="Q31P38"/>
<dbReference type="STRING" id="1140.Synpcc7942_1151"/>
<dbReference type="PaxDb" id="1140-Synpcc7942_1151"/>
<dbReference type="KEGG" id="syf:Synpcc7942_1151"/>
<dbReference type="eggNOG" id="COG0283">
    <property type="taxonomic scope" value="Bacteria"/>
</dbReference>
<dbReference type="eggNOG" id="COG0414">
    <property type="taxonomic scope" value="Bacteria"/>
</dbReference>
<dbReference type="HOGENOM" id="CLU_037427_0_0_3"/>
<dbReference type="OrthoDB" id="9773087at2"/>
<dbReference type="BioCyc" id="SYNEL:SYNPCC7942_1151-MONOMER"/>
<dbReference type="UniPathway" id="UPA00028">
    <property type="reaction ID" value="UER00005"/>
</dbReference>
<dbReference type="Proteomes" id="UP000889800">
    <property type="component" value="Chromosome"/>
</dbReference>
<dbReference type="GO" id="GO:0005829">
    <property type="term" value="C:cytosol"/>
    <property type="evidence" value="ECO:0007669"/>
    <property type="project" value="TreeGrafter"/>
</dbReference>
<dbReference type="GO" id="GO:0005524">
    <property type="term" value="F:ATP binding"/>
    <property type="evidence" value="ECO:0007669"/>
    <property type="project" value="UniProtKB-UniRule"/>
</dbReference>
<dbReference type="GO" id="GO:0036430">
    <property type="term" value="F:CMP kinase activity"/>
    <property type="evidence" value="ECO:0007669"/>
    <property type="project" value="RHEA"/>
</dbReference>
<dbReference type="GO" id="GO:0036431">
    <property type="term" value="F:dCMP kinase activity"/>
    <property type="evidence" value="ECO:0007669"/>
    <property type="project" value="RHEA"/>
</dbReference>
<dbReference type="GO" id="GO:0004592">
    <property type="term" value="F:pantoate-beta-alanine ligase activity"/>
    <property type="evidence" value="ECO:0007669"/>
    <property type="project" value="UniProtKB-UniRule"/>
</dbReference>
<dbReference type="GO" id="GO:0015949">
    <property type="term" value="P:nucleobase-containing small molecule interconversion"/>
    <property type="evidence" value="ECO:0007669"/>
    <property type="project" value="TreeGrafter"/>
</dbReference>
<dbReference type="GO" id="GO:0015940">
    <property type="term" value="P:pantothenate biosynthetic process"/>
    <property type="evidence" value="ECO:0007669"/>
    <property type="project" value="UniProtKB-UniRule"/>
</dbReference>
<dbReference type="GO" id="GO:0006220">
    <property type="term" value="P:pyrimidine nucleotide metabolic process"/>
    <property type="evidence" value="ECO:0007669"/>
    <property type="project" value="UniProtKB-UniRule"/>
</dbReference>
<dbReference type="CDD" id="cd02020">
    <property type="entry name" value="CMPK"/>
    <property type="match status" value="1"/>
</dbReference>
<dbReference type="CDD" id="cd02019">
    <property type="entry name" value="NK"/>
    <property type="match status" value="1"/>
</dbReference>
<dbReference type="CDD" id="cd00560">
    <property type="entry name" value="PanC"/>
    <property type="match status" value="1"/>
</dbReference>
<dbReference type="FunFam" id="3.30.1300.10:FF:000001">
    <property type="entry name" value="Pantothenate synthetase"/>
    <property type="match status" value="1"/>
</dbReference>
<dbReference type="FunFam" id="3.40.50.620:FF:000114">
    <property type="entry name" value="Pantothenate synthetase"/>
    <property type="match status" value="1"/>
</dbReference>
<dbReference type="Gene3D" id="3.40.50.620">
    <property type="entry name" value="HUPs"/>
    <property type="match status" value="1"/>
</dbReference>
<dbReference type="Gene3D" id="3.40.50.300">
    <property type="entry name" value="P-loop containing nucleotide triphosphate hydrolases"/>
    <property type="match status" value="1"/>
</dbReference>
<dbReference type="Gene3D" id="3.30.1300.10">
    <property type="entry name" value="Pantoate-beta-alanine ligase, C-terminal domain"/>
    <property type="match status" value="1"/>
</dbReference>
<dbReference type="HAMAP" id="MF_00238">
    <property type="entry name" value="Cytidyl_kinase_type1"/>
    <property type="match status" value="1"/>
</dbReference>
<dbReference type="HAMAP" id="MF_00158">
    <property type="entry name" value="PanC"/>
    <property type="match status" value="1"/>
</dbReference>
<dbReference type="HAMAP" id="MF_01349">
    <property type="entry name" value="PanCY"/>
    <property type="match status" value="1"/>
</dbReference>
<dbReference type="InterPro" id="IPR004821">
    <property type="entry name" value="Cyt_trans-like"/>
</dbReference>
<dbReference type="InterPro" id="IPR003136">
    <property type="entry name" value="Cytidylate_kin"/>
</dbReference>
<dbReference type="InterPro" id="IPR011994">
    <property type="entry name" value="Cytidylate_kinase_dom"/>
</dbReference>
<dbReference type="InterPro" id="IPR027417">
    <property type="entry name" value="P-loop_NTPase"/>
</dbReference>
<dbReference type="InterPro" id="IPR003721">
    <property type="entry name" value="Pantoate_ligase"/>
</dbReference>
<dbReference type="InterPro" id="IPR024894">
    <property type="entry name" value="Pantoate_ligase/cytidylate_kin"/>
</dbReference>
<dbReference type="InterPro" id="IPR042176">
    <property type="entry name" value="Pantoate_ligase_C"/>
</dbReference>
<dbReference type="InterPro" id="IPR014729">
    <property type="entry name" value="Rossmann-like_a/b/a_fold"/>
</dbReference>
<dbReference type="NCBIfam" id="TIGR00017">
    <property type="entry name" value="cmk"/>
    <property type="match status" value="1"/>
</dbReference>
<dbReference type="NCBIfam" id="TIGR00125">
    <property type="entry name" value="cyt_tran_rel"/>
    <property type="match status" value="1"/>
</dbReference>
<dbReference type="NCBIfam" id="TIGR00018">
    <property type="entry name" value="panC"/>
    <property type="match status" value="1"/>
</dbReference>
<dbReference type="NCBIfam" id="NF010004">
    <property type="entry name" value="PRK13477.1"/>
    <property type="match status" value="1"/>
</dbReference>
<dbReference type="PANTHER" id="PTHR21299:SF2">
    <property type="entry name" value="CYTIDYLATE KINASE"/>
    <property type="match status" value="1"/>
</dbReference>
<dbReference type="PANTHER" id="PTHR21299">
    <property type="entry name" value="CYTIDYLATE KINASE/PANTOATE-BETA-ALANINE LIGASE"/>
    <property type="match status" value="1"/>
</dbReference>
<dbReference type="Pfam" id="PF02224">
    <property type="entry name" value="Cytidylate_kin"/>
    <property type="match status" value="1"/>
</dbReference>
<dbReference type="Pfam" id="PF02569">
    <property type="entry name" value="Pantoate_ligase"/>
    <property type="match status" value="1"/>
</dbReference>
<dbReference type="SUPFAM" id="SSF52374">
    <property type="entry name" value="Nucleotidylyl transferase"/>
    <property type="match status" value="1"/>
</dbReference>
<dbReference type="SUPFAM" id="SSF52540">
    <property type="entry name" value="P-loop containing nucleoside triphosphate hydrolases"/>
    <property type="match status" value="1"/>
</dbReference>
<feature type="chain" id="PRO_0000239798" description="Bifunctional pantoate ligase/cytidylate kinase">
    <location>
        <begin position="1"/>
        <end position="527"/>
    </location>
</feature>
<feature type="region of interest" description="Pantoate--beta-alanine ligase" evidence="1">
    <location>
        <begin position="1"/>
        <end position="277"/>
    </location>
</feature>
<feature type="region of interest" description="Cytidylate kinase" evidence="1">
    <location>
        <begin position="278"/>
        <end position="527"/>
    </location>
</feature>
<feature type="region of interest" description="Disordered" evidence="2">
    <location>
        <begin position="507"/>
        <end position="527"/>
    </location>
</feature>
<feature type="compositionally biased region" description="Polar residues" evidence="2">
    <location>
        <begin position="511"/>
        <end position="527"/>
    </location>
</feature>
<feature type="active site" description="Proton donor" evidence="1">
    <location>
        <position position="34"/>
    </location>
</feature>
<feature type="binding site" evidence="1">
    <location>
        <begin position="27"/>
        <end position="34"/>
    </location>
    <ligand>
        <name>ATP</name>
        <dbReference type="ChEBI" id="CHEBI:30616"/>
    </ligand>
</feature>
<feature type="binding site" evidence="1">
    <location>
        <position position="58"/>
    </location>
    <ligand>
        <name>(R)-pantoate</name>
        <dbReference type="ChEBI" id="CHEBI:15980"/>
    </ligand>
</feature>
<feature type="binding site" evidence="1">
    <location>
        <position position="58"/>
    </location>
    <ligand>
        <name>beta-alanine</name>
        <dbReference type="ChEBI" id="CHEBI:57966"/>
    </ligand>
</feature>
<feature type="binding site" evidence="1">
    <location>
        <begin position="147"/>
        <end position="150"/>
    </location>
    <ligand>
        <name>ATP</name>
        <dbReference type="ChEBI" id="CHEBI:30616"/>
    </ligand>
</feature>
<feature type="binding site" evidence="1">
    <location>
        <position position="153"/>
    </location>
    <ligand>
        <name>(R)-pantoate</name>
        <dbReference type="ChEBI" id="CHEBI:15980"/>
    </ligand>
</feature>
<feature type="binding site" evidence="1">
    <location>
        <position position="176"/>
    </location>
    <ligand>
        <name>ATP</name>
        <dbReference type="ChEBI" id="CHEBI:30616"/>
    </ligand>
</feature>
<feature type="binding site" evidence="1">
    <location>
        <begin position="184"/>
        <end position="187"/>
    </location>
    <ligand>
        <name>ATP</name>
        <dbReference type="ChEBI" id="CHEBI:30616"/>
    </ligand>
</feature>
<reference key="1">
    <citation type="submission" date="2005-08" db="EMBL/GenBank/DDBJ databases">
        <title>Complete sequence of chromosome 1 of Synechococcus elongatus PCC 7942.</title>
        <authorList>
            <consortium name="US DOE Joint Genome Institute"/>
            <person name="Copeland A."/>
            <person name="Lucas S."/>
            <person name="Lapidus A."/>
            <person name="Barry K."/>
            <person name="Detter J.C."/>
            <person name="Glavina T."/>
            <person name="Hammon N."/>
            <person name="Israni S."/>
            <person name="Pitluck S."/>
            <person name="Schmutz J."/>
            <person name="Larimer F."/>
            <person name="Land M."/>
            <person name="Kyrpides N."/>
            <person name="Lykidis A."/>
            <person name="Golden S."/>
            <person name="Richardson P."/>
        </authorList>
    </citation>
    <scope>NUCLEOTIDE SEQUENCE [LARGE SCALE GENOMIC DNA]</scope>
    <source>
        <strain>ATCC 33912 / PCC 7942 / FACHB-805</strain>
    </source>
</reference>
<keyword id="KW-0067">ATP-binding</keyword>
<keyword id="KW-0963">Cytoplasm</keyword>
<keyword id="KW-0418">Kinase</keyword>
<keyword id="KW-0436">Ligase</keyword>
<keyword id="KW-0511">Multifunctional enzyme</keyword>
<keyword id="KW-0547">Nucleotide-binding</keyword>
<keyword id="KW-0566">Pantothenate biosynthesis</keyword>
<keyword id="KW-1185">Reference proteome</keyword>
<keyword id="KW-0808">Transferase</keyword>
<comment type="function">
    <text evidence="1">Catalyzes the condensation of pantoate with beta-alanine in an ATP-dependent reaction via a pantoyl-adenylate intermediate.</text>
</comment>
<comment type="function">
    <text evidence="1">Catalyzes the transfer of a phosphate group from ATP to either CMP or dCMP to form CDP or dCDP and ADP, respectively.</text>
</comment>
<comment type="catalytic activity">
    <reaction evidence="1">
        <text>(R)-pantoate + beta-alanine + ATP = (R)-pantothenate + AMP + diphosphate + H(+)</text>
        <dbReference type="Rhea" id="RHEA:10912"/>
        <dbReference type="ChEBI" id="CHEBI:15378"/>
        <dbReference type="ChEBI" id="CHEBI:15980"/>
        <dbReference type="ChEBI" id="CHEBI:29032"/>
        <dbReference type="ChEBI" id="CHEBI:30616"/>
        <dbReference type="ChEBI" id="CHEBI:33019"/>
        <dbReference type="ChEBI" id="CHEBI:57966"/>
        <dbReference type="ChEBI" id="CHEBI:456215"/>
        <dbReference type="EC" id="6.3.2.1"/>
    </reaction>
</comment>
<comment type="catalytic activity">
    <reaction evidence="1">
        <text>CMP + ATP = CDP + ADP</text>
        <dbReference type="Rhea" id="RHEA:11600"/>
        <dbReference type="ChEBI" id="CHEBI:30616"/>
        <dbReference type="ChEBI" id="CHEBI:58069"/>
        <dbReference type="ChEBI" id="CHEBI:60377"/>
        <dbReference type="ChEBI" id="CHEBI:456216"/>
        <dbReference type="EC" id="2.7.4.25"/>
    </reaction>
</comment>
<comment type="catalytic activity">
    <reaction evidence="1">
        <text>dCMP + ATP = dCDP + ADP</text>
        <dbReference type="Rhea" id="RHEA:25094"/>
        <dbReference type="ChEBI" id="CHEBI:30616"/>
        <dbReference type="ChEBI" id="CHEBI:57566"/>
        <dbReference type="ChEBI" id="CHEBI:58593"/>
        <dbReference type="ChEBI" id="CHEBI:456216"/>
        <dbReference type="EC" id="2.7.4.25"/>
    </reaction>
</comment>
<comment type="pathway">
    <text evidence="1">Cofactor biosynthesis; (R)-pantothenate biosynthesis; (R)-pantothenate from (R)-pantoate and beta-alanine: step 1/1.</text>
</comment>
<comment type="subcellular location">
    <subcellularLocation>
        <location evidence="1">Cytoplasm</location>
    </subcellularLocation>
</comment>
<comment type="similarity">
    <text evidence="1">In the N-terminal section; belongs to the pantothenate synthetase family.</text>
</comment>
<comment type="similarity">
    <text evidence="1">In the C-terminal section; belongs to the cytidylate kinase family. Type 1 subfamily.</text>
</comment>
<gene>
    <name evidence="1" type="primary">panC/cmk</name>
    <name type="ordered locus">Synpcc7942_1151</name>
</gene>
<organism>
    <name type="scientific">Synechococcus elongatus (strain ATCC 33912 / PCC 7942 / FACHB-805)</name>
    <name type="common">Anacystis nidulans R2</name>
    <dbReference type="NCBI Taxonomy" id="1140"/>
    <lineage>
        <taxon>Bacteria</taxon>
        <taxon>Bacillati</taxon>
        <taxon>Cyanobacteriota</taxon>
        <taxon>Cyanophyceae</taxon>
        <taxon>Synechococcales</taxon>
        <taxon>Synechococcaceae</taxon>
        <taxon>Synechococcus</taxon>
    </lineage>
</organism>